<reference key="1">
    <citation type="journal article" date="2003" name="Proc. Natl. Acad. Sci. U.S.A.">
        <title>Complete genome sequence of the marine planctomycete Pirellula sp. strain 1.</title>
        <authorList>
            <person name="Gloeckner F.O."/>
            <person name="Kube M."/>
            <person name="Bauer M."/>
            <person name="Teeling H."/>
            <person name="Lombardot T."/>
            <person name="Ludwig W."/>
            <person name="Gade D."/>
            <person name="Beck A."/>
            <person name="Borzym K."/>
            <person name="Heitmann K."/>
            <person name="Rabus R."/>
            <person name="Schlesner H."/>
            <person name="Amann R."/>
            <person name="Reinhardt R."/>
        </authorList>
    </citation>
    <scope>NUCLEOTIDE SEQUENCE [LARGE SCALE GENOMIC DNA]</scope>
    <source>
        <strain>DSM 10527 / NCIMB 13988 / SH1</strain>
    </source>
</reference>
<comment type="function">
    <text evidence="1">Catalyzes the radical-mediated insertion of two sulfur atoms into the C-6 and C-8 positions of the octanoyl moiety bound to the lipoyl domains of lipoate-dependent enzymes, thereby converting the octanoylated domains into lipoylated derivatives.</text>
</comment>
<comment type="catalytic activity">
    <reaction evidence="1">
        <text>[[Fe-S] cluster scaffold protein carrying a second [4Fe-4S](2+) cluster] + N(6)-octanoyl-L-lysyl-[protein] + 2 oxidized [2Fe-2S]-[ferredoxin] + 2 S-adenosyl-L-methionine + 4 H(+) = [[Fe-S] cluster scaffold protein] + N(6)-[(R)-dihydrolipoyl]-L-lysyl-[protein] + 4 Fe(3+) + 2 hydrogen sulfide + 2 5'-deoxyadenosine + 2 L-methionine + 2 reduced [2Fe-2S]-[ferredoxin]</text>
        <dbReference type="Rhea" id="RHEA:16585"/>
        <dbReference type="Rhea" id="RHEA-COMP:9928"/>
        <dbReference type="Rhea" id="RHEA-COMP:10000"/>
        <dbReference type="Rhea" id="RHEA-COMP:10001"/>
        <dbReference type="Rhea" id="RHEA-COMP:10475"/>
        <dbReference type="Rhea" id="RHEA-COMP:14568"/>
        <dbReference type="Rhea" id="RHEA-COMP:14569"/>
        <dbReference type="ChEBI" id="CHEBI:15378"/>
        <dbReference type="ChEBI" id="CHEBI:17319"/>
        <dbReference type="ChEBI" id="CHEBI:29034"/>
        <dbReference type="ChEBI" id="CHEBI:29919"/>
        <dbReference type="ChEBI" id="CHEBI:33722"/>
        <dbReference type="ChEBI" id="CHEBI:33737"/>
        <dbReference type="ChEBI" id="CHEBI:33738"/>
        <dbReference type="ChEBI" id="CHEBI:57844"/>
        <dbReference type="ChEBI" id="CHEBI:59789"/>
        <dbReference type="ChEBI" id="CHEBI:78809"/>
        <dbReference type="ChEBI" id="CHEBI:83100"/>
        <dbReference type="EC" id="2.8.1.8"/>
    </reaction>
</comment>
<comment type="cofactor">
    <cofactor evidence="1">
        <name>[4Fe-4S] cluster</name>
        <dbReference type="ChEBI" id="CHEBI:49883"/>
    </cofactor>
    <text evidence="1">Binds 2 [4Fe-4S] clusters per subunit. One cluster is coordinated with 3 cysteines and an exchangeable S-adenosyl-L-methionine.</text>
</comment>
<comment type="pathway">
    <text evidence="1">Protein modification; protein lipoylation via endogenous pathway; protein N(6)-(lipoyl)lysine from octanoyl-[acyl-carrier-protein]: step 2/2.</text>
</comment>
<comment type="subcellular location">
    <subcellularLocation>
        <location evidence="1">Cytoplasm</location>
    </subcellularLocation>
</comment>
<comment type="similarity">
    <text evidence="1">Belongs to the radical SAM superfamily. Lipoyl synthase family.</text>
</comment>
<dbReference type="EC" id="2.8.1.8" evidence="1"/>
<dbReference type="EMBL" id="BX294141">
    <property type="protein sequence ID" value="CAD78142.1"/>
    <property type="molecule type" value="Genomic_DNA"/>
</dbReference>
<dbReference type="RefSeq" id="NP_866361.1">
    <property type="nucleotide sequence ID" value="NC_005027.1"/>
</dbReference>
<dbReference type="RefSeq" id="WP_008665013.1">
    <property type="nucleotide sequence ID" value="NC_005027.1"/>
</dbReference>
<dbReference type="SMR" id="Q7UH37"/>
<dbReference type="FunCoup" id="Q7UH37">
    <property type="interactions" value="536"/>
</dbReference>
<dbReference type="STRING" id="243090.RB4868"/>
<dbReference type="EnsemblBacteria" id="CAD78142">
    <property type="protein sequence ID" value="CAD78142"/>
    <property type="gene ID" value="RB4868"/>
</dbReference>
<dbReference type="KEGG" id="rba:RB4868"/>
<dbReference type="PATRIC" id="fig|243090.15.peg.2308"/>
<dbReference type="eggNOG" id="COG0320">
    <property type="taxonomic scope" value="Bacteria"/>
</dbReference>
<dbReference type="HOGENOM" id="CLU_033144_2_1_0"/>
<dbReference type="InParanoid" id="Q7UH37"/>
<dbReference type="OrthoDB" id="9787898at2"/>
<dbReference type="UniPathway" id="UPA00538">
    <property type="reaction ID" value="UER00593"/>
</dbReference>
<dbReference type="Proteomes" id="UP000001025">
    <property type="component" value="Chromosome"/>
</dbReference>
<dbReference type="GO" id="GO:0005737">
    <property type="term" value="C:cytoplasm"/>
    <property type="evidence" value="ECO:0007669"/>
    <property type="project" value="UniProtKB-SubCell"/>
</dbReference>
<dbReference type="GO" id="GO:0051539">
    <property type="term" value="F:4 iron, 4 sulfur cluster binding"/>
    <property type="evidence" value="ECO:0007669"/>
    <property type="project" value="UniProtKB-UniRule"/>
</dbReference>
<dbReference type="GO" id="GO:0016992">
    <property type="term" value="F:lipoate synthase activity"/>
    <property type="evidence" value="ECO:0007669"/>
    <property type="project" value="UniProtKB-UniRule"/>
</dbReference>
<dbReference type="GO" id="GO:0046872">
    <property type="term" value="F:metal ion binding"/>
    <property type="evidence" value="ECO:0007669"/>
    <property type="project" value="UniProtKB-KW"/>
</dbReference>
<dbReference type="CDD" id="cd01335">
    <property type="entry name" value="Radical_SAM"/>
    <property type="match status" value="1"/>
</dbReference>
<dbReference type="FunFam" id="3.20.20.70:FF:000186">
    <property type="entry name" value="Lipoyl synthase"/>
    <property type="match status" value="1"/>
</dbReference>
<dbReference type="Gene3D" id="3.20.20.70">
    <property type="entry name" value="Aldolase class I"/>
    <property type="match status" value="1"/>
</dbReference>
<dbReference type="HAMAP" id="MF_00206">
    <property type="entry name" value="Lipoyl_synth"/>
    <property type="match status" value="1"/>
</dbReference>
<dbReference type="InterPro" id="IPR013785">
    <property type="entry name" value="Aldolase_TIM"/>
</dbReference>
<dbReference type="InterPro" id="IPR006638">
    <property type="entry name" value="Elp3/MiaA/NifB-like_rSAM"/>
</dbReference>
<dbReference type="InterPro" id="IPR003698">
    <property type="entry name" value="Lipoyl_synth"/>
</dbReference>
<dbReference type="InterPro" id="IPR007197">
    <property type="entry name" value="rSAM"/>
</dbReference>
<dbReference type="NCBIfam" id="TIGR00510">
    <property type="entry name" value="lipA"/>
    <property type="match status" value="1"/>
</dbReference>
<dbReference type="NCBIfam" id="NF004019">
    <property type="entry name" value="PRK05481.1"/>
    <property type="match status" value="1"/>
</dbReference>
<dbReference type="NCBIfam" id="NF009544">
    <property type="entry name" value="PRK12928.1"/>
    <property type="match status" value="1"/>
</dbReference>
<dbReference type="PANTHER" id="PTHR10949">
    <property type="entry name" value="LIPOYL SYNTHASE"/>
    <property type="match status" value="1"/>
</dbReference>
<dbReference type="PANTHER" id="PTHR10949:SF0">
    <property type="entry name" value="LIPOYL SYNTHASE, MITOCHONDRIAL"/>
    <property type="match status" value="1"/>
</dbReference>
<dbReference type="Pfam" id="PF04055">
    <property type="entry name" value="Radical_SAM"/>
    <property type="match status" value="1"/>
</dbReference>
<dbReference type="PIRSF" id="PIRSF005963">
    <property type="entry name" value="Lipoyl_synth"/>
    <property type="match status" value="1"/>
</dbReference>
<dbReference type="SFLD" id="SFLDF00271">
    <property type="entry name" value="lipoyl_synthase"/>
    <property type="match status" value="1"/>
</dbReference>
<dbReference type="SFLD" id="SFLDS00029">
    <property type="entry name" value="Radical_SAM"/>
    <property type="match status" value="1"/>
</dbReference>
<dbReference type="SMART" id="SM00729">
    <property type="entry name" value="Elp3"/>
    <property type="match status" value="1"/>
</dbReference>
<dbReference type="SUPFAM" id="SSF102114">
    <property type="entry name" value="Radical SAM enzymes"/>
    <property type="match status" value="1"/>
</dbReference>
<dbReference type="PROSITE" id="PS51918">
    <property type="entry name" value="RADICAL_SAM"/>
    <property type="match status" value="1"/>
</dbReference>
<proteinExistence type="inferred from homology"/>
<evidence type="ECO:0000255" key="1">
    <source>
        <dbReference type="HAMAP-Rule" id="MF_00206"/>
    </source>
</evidence>
<evidence type="ECO:0000255" key="2">
    <source>
        <dbReference type="PROSITE-ProRule" id="PRU01266"/>
    </source>
</evidence>
<gene>
    <name evidence="1" type="primary">lipA</name>
    <name type="ordered locus">RB4868</name>
</gene>
<sequence>MIFCLSSGQTPMAFRLPVVAEPEMPAGTDVSSTGRLPRWLKRPIPKSNSNHLTDSLMEEYGLETVCDNAKCPNRMECYSQQTATFMVLGNVCTRPCGFCAVSRGRPPAAPAVDEPDRIAKAAERLGLKHVVITSVTRDDLPDGGADHFHNCVIAVRERTGATTEVLTPDFVHCKEALARVIEAKPTVFNHNMETVPRLYRRVRGPKSDYAWTLEMMRQVKRYDAEVKTKSGLMLGLGEERGELLDALSDLREHDVDFLTLGQYLQPGEKYLPVVRYVPPEEFDELADIAKSMGFKKVASGPFVRSSYHARDMAETE</sequence>
<feature type="chain" id="PRO_0000102349" description="Lipoyl synthase">
    <location>
        <begin position="1"/>
        <end position="316"/>
    </location>
</feature>
<feature type="domain" description="Radical SAM core" evidence="2">
    <location>
        <begin position="78"/>
        <end position="295"/>
    </location>
</feature>
<feature type="binding site" evidence="1">
    <location>
        <position position="66"/>
    </location>
    <ligand>
        <name>[4Fe-4S] cluster</name>
        <dbReference type="ChEBI" id="CHEBI:49883"/>
        <label>1</label>
    </ligand>
</feature>
<feature type="binding site" evidence="1">
    <location>
        <position position="71"/>
    </location>
    <ligand>
        <name>[4Fe-4S] cluster</name>
        <dbReference type="ChEBI" id="CHEBI:49883"/>
        <label>1</label>
    </ligand>
</feature>
<feature type="binding site" evidence="1">
    <location>
        <position position="77"/>
    </location>
    <ligand>
        <name>[4Fe-4S] cluster</name>
        <dbReference type="ChEBI" id="CHEBI:49883"/>
        <label>1</label>
    </ligand>
</feature>
<feature type="binding site" evidence="1">
    <location>
        <position position="92"/>
    </location>
    <ligand>
        <name>[4Fe-4S] cluster</name>
        <dbReference type="ChEBI" id="CHEBI:49883"/>
        <label>2</label>
        <note>4Fe-4S-S-AdoMet</note>
    </ligand>
</feature>
<feature type="binding site" evidence="1">
    <location>
        <position position="96"/>
    </location>
    <ligand>
        <name>[4Fe-4S] cluster</name>
        <dbReference type="ChEBI" id="CHEBI:49883"/>
        <label>2</label>
        <note>4Fe-4S-S-AdoMet</note>
    </ligand>
</feature>
<feature type="binding site" evidence="1">
    <location>
        <position position="99"/>
    </location>
    <ligand>
        <name>[4Fe-4S] cluster</name>
        <dbReference type="ChEBI" id="CHEBI:49883"/>
        <label>2</label>
        <note>4Fe-4S-S-AdoMet</note>
    </ligand>
</feature>
<feature type="binding site" evidence="1">
    <location>
        <position position="306"/>
    </location>
    <ligand>
        <name>[4Fe-4S] cluster</name>
        <dbReference type="ChEBI" id="CHEBI:49883"/>
        <label>1</label>
    </ligand>
</feature>
<protein>
    <recommendedName>
        <fullName evidence="1">Lipoyl synthase</fullName>
        <ecNumber evidence="1">2.8.1.8</ecNumber>
    </recommendedName>
    <alternativeName>
        <fullName evidence="1">Lip-syn</fullName>
        <shortName evidence="1">LS</shortName>
    </alternativeName>
    <alternativeName>
        <fullName evidence="1">Lipoate synthase</fullName>
    </alternativeName>
    <alternativeName>
        <fullName evidence="1">Lipoic acid synthase</fullName>
    </alternativeName>
    <alternativeName>
        <fullName evidence="1">Sulfur insertion protein LipA</fullName>
    </alternativeName>
</protein>
<keyword id="KW-0004">4Fe-4S</keyword>
<keyword id="KW-0963">Cytoplasm</keyword>
<keyword id="KW-0408">Iron</keyword>
<keyword id="KW-0411">Iron-sulfur</keyword>
<keyword id="KW-0479">Metal-binding</keyword>
<keyword id="KW-1185">Reference proteome</keyword>
<keyword id="KW-0949">S-adenosyl-L-methionine</keyword>
<keyword id="KW-0808">Transferase</keyword>
<accession>Q7UH37</accession>
<name>LIPA_RHOBA</name>
<organism>
    <name type="scientific">Rhodopirellula baltica (strain DSM 10527 / NCIMB 13988 / SH1)</name>
    <dbReference type="NCBI Taxonomy" id="243090"/>
    <lineage>
        <taxon>Bacteria</taxon>
        <taxon>Pseudomonadati</taxon>
        <taxon>Planctomycetota</taxon>
        <taxon>Planctomycetia</taxon>
        <taxon>Pirellulales</taxon>
        <taxon>Pirellulaceae</taxon>
        <taxon>Rhodopirellula</taxon>
    </lineage>
</organism>